<gene>
    <name type="primary">ankfn1</name>
</gene>
<protein>
    <recommendedName>
        <fullName>Ankyrin repeat and fibronectin type-III domain-containing protein 1</fullName>
    </recommendedName>
</protein>
<comment type="function">
    <text evidence="5">Required for vestibular-related functions.</text>
</comment>
<comment type="alternative products">
    <event type="alternative splicing"/>
    <isoform>
        <id>A0A8M9QN10-1</id>
        <name>1</name>
        <sequence type="displayed"/>
    </isoform>
    <isoform>
        <id>A0A8M9QN10-2</id>
        <name>2</name>
        <sequence type="described" ref="VSP_061842"/>
    </isoform>
</comment>
<comment type="disruption phenotype">
    <text evidence="5">Inactivation of ankfn1 produces vestibular defects in fish larvae.</text>
</comment>
<organism>
    <name type="scientific">Danio rerio</name>
    <name type="common">Zebrafish</name>
    <name type="synonym">Brachydanio rerio</name>
    <dbReference type="NCBI Taxonomy" id="7955"/>
    <lineage>
        <taxon>Eukaryota</taxon>
        <taxon>Metazoa</taxon>
        <taxon>Chordata</taxon>
        <taxon>Craniata</taxon>
        <taxon>Vertebrata</taxon>
        <taxon>Euteleostomi</taxon>
        <taxon>Actinopterygii</taxon>
        <taxon>Neopterygii</taxon>
        <taxon>Teleostei</taxon>
        <taxon>Ostariophysi</taxon>
        <taxon>Cypriniformes</taxon>
        <taxon>Danionidae</taxon>
        <taxon>Danioninae</taxon>
        <taxon>Danio</taxon>
    </lineage>
</organism>
<name>ANKF1_DANRE</name>
<evidence type="ECO:0000250" key="1">
    <source>
        <dbReference type="UniProtKB" id="A0A571BF63"/>
    </source>
</evidence>
<evidence type="ECO:0000255" key="2"/>
<evidence type="ECO:0000255" key="3">
    <source>
        <dbReference type="PROSITE-ProRule" id="PRU00316"/>
    </source>
</evidence>
<evidence type="ECO:0000256" key="4">
    <source>
        <dbReference type="SAM" id="MobiDB-lite"/>
    </source>
</evidence>
<evidence type="ECO:0000269" key="5">
    <source>
    </source>
</evidence>
<accession>A0A8M9QN10</accession>
<reference key="1">
    <citation type="journal article" date="2013" name="Nature">
        <title>The zebrafish reference genome sequence and its relationship to the human genome.</title>
        <authorList>
            <person name="Howe K."/>
            <person name="Clark M.D."/>
            <person name="Torroja C.F."/>
            <person name="Torrance J."/>
            <person name="Berthelot C."/>
            <person name="Muffato M."/>
            <person name="Collins J.E."/>
            <person name="Humphray S."/>
            <person name="McLaren K."/>
            <person name="Matthews L."/>
            <person name="McLaren S."/>
            <person name="Sealy I."/>
            <person name="Caccamo M."/>
            <person name="Churcher C."/>
            <person name="Scott C."/>
            <person name="Barrett J.C."/>
            <person name="Koch R."/>
            <person name="Rauch G.J."/>
            <person name="White S."/>
            <person name="Chow W."/>
            <person name="Kilian B."/>
            <person name="Quintais L.T."/>
            <person name="Guerra-Assuncao J.A."/>
            <person name="Zhou Y."/>
            <person name="Gu Y."/>
            <person name="Yen J."/>
            <person name="Vogel J.H."/>
            <person name="Eyre T."/>
            <person name="Redmond S."/>
            <person name="Banerjee R."/>
            <person name="Chi J."/>
            <person name="Fu B."/>
            <person name="Langley E."/>
            <person name="Maguire S.F."/>
            <person name="Laird G.K."/>
            <person name="Lloyd D."/>
            <person name="Kenyon E."/>
            <person name="Donaldson S."/>
            <person name="Sehra H."/>
            <person name="Almeida-King J."/>
            <person name="Loveland J."/>
            <person name="Trevanion S."/>
            <person name="Jones M."/>
            <person name="Quail M."/>
            <person name="Willey D."/>
            <person name="Hunt A."/>
            <person name="Burton J."/>
            <person name="Sims S."/>
            <person name="McLay K."/>
            <person name="Plumb B."/>
            <person name="Davis J."/>
            <person name="Clee C."/>
            <person name="Oliver K."/>
            <person name="Clark R."/>
            <person name="Riddle C."/>
            <person name="Elliot D."/>
            <person name="Threadgold G."/>
            <person name="Harden G."/>
            <person name="Ware D."/>
            <person name="Begum S."/>
            <person name="Mortimore B."/>
            <person name="Kerry G."/>
            <person name="Heath P."/>
            <person name="Phillimore B."/>
            <person name="Tracey A."/>
            <person name="Corby N."/>
            <person name="Dunn M."/>
            <person name="Johnson C."/>
            <person name="Wood J."/>
            <person name="Clark S."/>
            <person name="Pelan S."/>
            <person name="Griffiths G."/>
            <person name="Smith M."/>
            <person name="Glithero R."/>
            <person name="Howden P."/>
            <person name="Barker N."/>
            <person name="Lloyd C."/>
            <person name="Stevens C."/>
            <person name="Harley J."/>
            <person name="Holt K."/>
            <person name="Panagiotidis G."/>
            <person name="Lovell J."/>
            <person name="Beasley H."/>
            <person name="Henderson C."/>
            <person name="Gordon D."/>
            <person name="Auger K."/>
            <person name="Wright D."/>
            <person name="Collins J."/>
            <person name="Raisen C."/>
            <person name="Dyer L."/>
            <person name="Leung K."/>
            <person name="Robertson L."/>
            <person name="Ambridge K."/>
            <person name="Leongamornlert D."/>
            <person name="McGuire S."/>
            <person name="Gilderthorp R."/>
            <person name="Griffiths C."/>
            <person name="Manthravadi D."/>
            <person name="Nichol S."/>
            <person name="Barker G."/>
            <person name="Whitehead S."/>
            <person name="Kay M."/>
            <person name="Brown J."/>
            <person name="Murnane C."/>
            <person name="Gray E."/>
            <person name="Humphries M."/>
            <person name="Sycamore N."/>
            <person name="Barker D."/>
            <person name="Saunders D."/>
            <person name="Wallis J."/>
            <person name="Babbage A."/>
            <person name="Hammond S."/>
            <person name="Mashreghi-Mohammadi M."/>
            <person name="Barr L."/>
            <person name="Martin S."/>
            <person name="Wray P."/>
            <person name="Ellington A."/>
            <person name="Matthews N."/>
            <person name="Ellwood M."/>
            <person name="Woodmansey R."/>
            <person name="Clark G."/>
            <person name="Cooper J."/>
            <person name="Tromans A."/>
            <person name="Grafham D."/>
            <person name="Skuce C."/>
            <person name="Pandian R."/>
            <person name="Andrews R."/>
            <person name="Harrison E."/>
            <person name="Kimberley A."/>
            <person name="Garnett J."/>
            <person name="Fosker N."/>
            <person name="Hall R."/>
            <person name="Garner P."/>
            <person name="Kelly D."/>
            <person name="Bird C."/>
            <person name="Palmer S."/>
            <person name="Gehring I."/>
            <person name="Berger A."/>
            <person name="Dooley C.M."/>
            <person name="Ersan-Urun Z."/>
            <person name="Eser C."/>
            <person name="Geiger H."/>
            <person name="Geisler M."/>
            <person name="Karotki L."/>
            <person name="Kirn A."/>
            <person name="Konantz J."/>
            <person name="Konantz M."/>
            <person name="Oberlander M."/>
            <person name="Rudolph-Geiger S."/>
            <person name="Teucke M."/>
            <person name="Lanz C."/>
            <person name="Raddatz G."/>
            <person name="Osoegawa K."/>
            <person name="Zhu B."/>
            <person name="Rapp A."/>
            <person name="Widaa S."/>
            <person name="Langford C."/>
            <person name="Yang F."/>
            <person name="Schuster S.C."/>
            <person name="Carter N.P."/>
            <person name="Harrow J."/>
            <person name="Ning Z."/>
            <person name="Herrero J."/>
            <person name="Searle S.M."/>
            <person name="Enright A."/>
            <person name="Geisler R."/>
            <person name="Plasterk R.H."/>
            <person name="Lee C."/>
            <person name="Westerfield M."/>
            <person name="de Jong P.J."/>
            <person name="Zon L.I."/>
            <person name="Postlethwait J.H."/>
            <person name="Nusslein-Volhard C."/>
            <person name="Hubbard T.J."/>
            <person name="Roest Crollius H."/>
            <person name="Rogers J."/>
            <person name="Stemple D.L."/>
        </authorList>
    </citation>
    <scope>NUCLEOTIDE SEQUENCE [LARGE SCALE GENOMIC DNA]</scope>
    <source>
        <strain>Tuebingen</strain>
    </source>
</reference>
<reference key="2">
    <citation type="journal article" date="2022" name="G3 (Bethesda)">
        <title>Ankfn1-mutant vestibular defects require loss of both ancestral and derived paralogs for penetrance in zebrafish.</title>
        <authorList>
            <person name="Ross K.D."/>
            <person name="Ren J."/>
            <person name="Zhang R."/>
            <person name="Chi N.C."/>
            <person name="Hamilton B.A."/>
        </authorList>
    </citation>
    <scope>DISRUPTION PHENOTYPE</scope>
    <scope>FUNCTION</scope>
</reference>
<keyword id="KW-0025">Alternative splicing</keyword>
<keyword id="KW-0040">ANK repeat</keyword>
<keyword id="KW-1185">Reference proteome</keyword>
<keyword id="KW-0677">Repeat</keyword>
<dbReference type="EMBL" id="BX248086">
    <property type="status" value="NOT_ANNOTATED_CDS"/>
    <property type="molecule type" value="Genomic_DNA"/>
</dbReference>
<dbReference type="EMBL" id="CT573006">
    <property type="status" value="NOT_ANNOTATED_CDS"/>
    <property type="molecule type" value="Genomic_DNA"/>
</dbReference>
<dbReference type="RefSeq" id="XP_009305075.1">
    <property type="nucleotide sequence ID" value="XM_009306800.2"/>
</dbReference>
<dbReference type="HOGENOM" id="CLU_006446_0_0_1"/>
<dbReference type="OrthoDB" id="2428204at2759"/>
<dbReference type="Proteomes" id="UP000000437">
    <property type="component" value="Unplaced"/>
</dbReference>
<dbReference type="GO" id="GO:0005819">
    <property type="term" value="C:spindle"/>
    <property type="evidence" value="ECO:0000318"/>
    <property type="project" value="GO_Central"/>
</dbReference>
<dbReference type="GO" id="GO:0000132">
    <property type="term" value="P:establishment of mitotic spindle orientation"/>
    <property type="evidence" value="ECO:0000318"/>
    <property type="project" value="GO_Central"/>
</dbReference>
<dbReference type="GO" id="GO:0061172">
    <property type="term" value="P:regulation of establishment of bipolar cell polarity"/>
    <property type="evidence" value="ECO:0000318"/>
    <property type="project" value="GO_Central"/>
</dbReference>
<dbReference type="CDD" id="cd00063">
    <property type="entry name" value="FN3"/>
    <property type="match status" value="1"/>
</dbReference>
<dbReference type="Gene3D" id="1.25.40.20">
    <property type="entry name" value="Ankyrin repeat-containing domain"/>
    <property type="match status" value="1"/>
</dbReference>
<dbReference type="Gene3D" id="2.60.40.10">
    <property type="entry name" value="Immunoglobulins"/>
    <property type="match status" value="1"/>
</dbReference>
<dbReference type="InterPro" id="IPR039269">
    <property type="entry name" value="ANKFN1"/>
</dbReference>
<dbReference type="InterPro" id="IPR002110">
    <property type="entry name" value="Ankyrin_rpt"/>
</dbReference>
<dbReference type="InterPro" id="IPR036770">
    <property type="entry name" value="Ankyrin_rpt-contain_sf"/>
</dbReference>
<dbReference type="InterPro" id="IPR003961">
    <property type="entry name" value="FN3_dom"/>
</dbReference>
<dbReference type="InterPro" id="IPR036116">
    <property type="entry name" value="FN3_sf"/>
</dbReference>
<dbReference type="InterPro" id="IPR013783">
    <property type="entry name" value="Ig-like_fold"/>
</dbReference>
<dbReference type="PANTHER" id="PTHR21437">
    <property type="entry name" value="WIDE AWAKE"/>
    <property type="match status" value="1"/>
</dbReference>
<dbReference type="PANTHER" id="PTHR21437:SF1">
    <property type="entry name" value="WIDE AWAKE"/>
    <property type="match status" value="1"/>
</dbReference>
<dbReference type="Pfam" id="PF13637">
    <property type="entry name" value="Ank_4"/>
    <property type="match status" value="1"/>
</dbReference>
<dbReference type="Pfam" id="PF00041">
    <property type="entry name" value="fn3"/>
    <property type="match status" value="1"/>
</dbReference>
<dbReference type="SMART" id="SM00060">
    <property type="entry name" value="FN3"/>
    <property type="match status" value="1"/>
</dbReference>
<dbReference type="SUPFAM" id="SSF48403">
    <property type="entry name" value="Ankyrin repeat"/>
    <property type="match status" value="1"/>
</dbReference>
<dbReference type="SUPFAM" id="SSF49265">
    <property type="entry name" value="Fibronectin type III"/>
    <property type="match status" value="1"/>
</dbReference>
<dbReference type="PROSITE" id="PS50297">
    <property type="entry name" value="ANK_REP_REGION"/>
    <property type="match status" value="1"/>
</dbReference>
<dbReference type="PROSITE" id="PS50088">
    <property type="entry name" value="ANK_REPEAT"/>
    <property type="match status" value="1"/>
</dbReference>
<dbReference type="PROSITE" id="PS50853">
    <property type="entry name" value="FN3"/>
    <property type="match status" value="1"/>
</dbReference>
<proteinExistence type="predicted"/>
<sequence>MLSQKFSPRRSGRHVTGSFESSFRFLREEDADVLRIRRGSMSPEPENKEKWLKMSYEAEKTCLLAPQESQTPCVCHTANEKYEIPGMGDDSVLEMLSYSKFSDLETWLCMPSTLLPRSRDSVCSLPPPSHENGTADTDRESRPPENTSINLSQCQERKTHLLPPSSLMPVSASPTSSTPLRTTSTPLPKPNRDSGQGGVSVRKRRRLAASPGGLHWDASGSVLRDHDRGETPSLSEVKRFPRSVDSESLVPELWRDRAPLRKTISIDDRLLQQTPREHHRLLSRLERGKKKLRNINSLGATGRYETHKKSESRISRLAQRLNQRQSDAALIKDFRPLFLLSGSAGSSQSLDRNFSISMSQQMQNLQLTQSKKGAGPASPSAAKRLYRNLSEKFKGSHSSFEDAYFFGRSDRIRKVSNIQSSEALFEAVEQQDLDAVQILLFQYTADELDLNTPNSEGLTPLDISIMTNNVPIAKLLLKAGGKESPHFVSLESRDAHLSALVQEAQRRASELSNQVMRESLSLETSDKEKQLKAWEWRCKLYKRMRTGFEHARQPEAPLMVRLSVTGSTTLTVSFQEPASMNSAVVTKYKVEWSCLKDFSLLAGELILENLQSLKCTITGLTMGRQYYVQVSAYNMKGWGPAQLSQPPSAVPSNWKDCDGRESRRRGHIEAMERLLQQVRATHQHYCCGDTSKLQNPSRKQSVSRSLKHLFHSSTKFVKSLKRGVYIASVFYHKDSLLVTNEDQIPIVEVDDSYSSSLMQDFLWFTKLSCMWEDVRWLRQSLAVSTSSSSTLQSRQKMLAAAGQLQNLLGTHNLGRVHYEPIKDRHGNVLLVTVREMDSLYSFFNGKWMQVSKLQSQRKSLSTPEEPYALDILLITIQDILAYQRRSQHRLSSGLYLGYLKLSSSVDQIKVLVPQRMPNMLCHTKIRDNWNVSRDEWEWLQSLSGPVEVERADQATGCLLFSELQTAIKSLLHQINLPLHQAKHFRLYTHEVLELGHNVSFLLLLPASDDVCSAPGQTNPYTPHSGFLNLPLQMFELVHFCSYKEKFISLYCRLSSVLDLDALITQQAFREAITDSEVSTAKQRHQHILDYIQQLDEMWREVRWITNALQYARYKQPLGWVPITWLVDVSVEPPVQKNDSTSSNTDYVPTPSPSPEMRRRKPTIESQPGSDEEGCSEVFLPTDSDYDSSDALSPRDLDLVYSSAQDLSHQAVHVLSGSAPDVLQMHDLKYSVCSKSILETESCTKDLEDLSLSSYSVKTTDKPSRSKFLADAPTKRKLLSKSHPQRSYFGGPHRWLRVQSESHTPSLSEGIYTRQSDIDLPLETPLSIPHSPTTSYSLDEYRQPYRESKPNVRRIFVESCSKTSPCRDAPHWEEEEEKGSRGATASGARPGYSSTSEAQDVDSDEQTNEQVSEILSSTL</sequence>
<feature type="chain" id="PRO_0000457807" description="Ankyrin repeat and fibronectin type-III domain-containing protein 1">
    <location>
        <begin position="1"/>
        <end position="1418"/>
    </location>
</feature>
<feature type="repeat" description="ANK 1" evidence="2">
    <location>
        <begin position="419"/>
        <end position="450"/>
    </location>
</feature>
<feature type="repeat" description="ANK 2" evidence="2">
    <location>
        <begin position="456"/>
        <end position="485"/>
    </location>
</feature>
<feature type="domain" description="Fibronectin type-III" evidence="3">
    <location>
        <begin position="556"/>
        <end position="652"/>
    </location>
</feature>
<feature type="region of interest" description="Disordered" evidence="4">
    <location>
        <begin position="119"/>
        <end position="236"/>
    </location>
</feature>
<feature type="region of interest" description="Highly conserved peptide sequence" evidence="1">
    <location>
        <begin position="893"/>
        <end position="900"/>
    </location>
</feature>
<feature type="region of interest" description="Disordered" evidence="4">
    <location>
        <begin position="1134"/>
        <end position="1179"/>
    </location>
</feature>
<feature type="region of interest" description="Disordered" evidence="4">
    <location>
        <begin position="1321"/>
        <end position="1343"/>
    </location>
</feature>
<feature type="region of interest" description="Disordered" evidence="4">
    <location>
        <begin position="1361"/>
        <end position="1418"/>
    </location>
</feature>
<feature type="compositionally biased region" description="Polar residues" evidence="4">
    <location>
        <begin position="144"/>
        <end position="154"/>
    </location>
</feature>
<feature type="compositionally biased region" description="Low complexity" evidence="4">
    <location>
        <begin position="171"/>
        <end position="186"/>
    </location>
</feature>
<feature type="compositionally biased region" description="Basic and acidic residues" evidence="4">
    <location>
        <begin position="223"/>
        <end position="236"/>
    </location>
</feature>
<feature type="compositionally biased region" description="Polar residues" evidence="4">
    <location>
        <begin position="1136"/>
        <end position="1146"/>
    </location>
</feature>
<feature type="compositionally biased region" description="Polar residues" evidence="4">
    <location>
        <begin position="1407"/>
        <end position="1418"/>
    </location>
</feature>
<feature type="splice variant" id="VSP_061842" description="In isoform 2.">
    <location>
        <begin position="417"/>
        <end position="419"/>
    </location>
</feature>